<keyword id="KW-0012">Acyltransferase</keyword>
<keyword id="KW-0963">Cytoplasm</keyword>
<keyword id="KW-0441">Lipid A biosynthesis</keyword>
<keyword id="KW-0444">Lipid biosynthesis</keyword>
<keyword id="KW-0443">Lipid metabolism</keyword>
<keyword id="KW-1185">Reference proteome</keyword>
<keyword id="KW-0677">Repeat</keyword>
<keyword id="KW-0808">Transferase</keyword>
<reference key="1">
    <citation type="journal article" date="2008" name="Proc. Natl. Acad. Sci. U.S.A.">
        <title>Nitrogen fixation island and rhizosphere competence traits in the genome of root-associated Pseudomonas stutzeri A1501.</title>
        <authorList>
            <person name="Yan Y."/>
            <person name="Yang J."/>
            <person name="Dou Y."/>
            <person name="Chen M."/>
            <person name="Ping S."/>
            <person name="Peng J."/>
            <person name="Lu W."/>
            <person name="Zhang W."/>
            <person name="Yao Z."/>
            <person name="Li H."/>
            <person name="Liu W."/>
            <person name="He S."/>
            <person name="Geng L."/>
            <person name="Zhang X."/>
            <person name="Yang F."/>
            <person name="Yu H."/>
            <person name="Zhan Y."/>
            <person name="Li D."/>
            <person name="Lin Z."/>
            <person name="Wang Y."/>
            <person name="Elmerich C."/>
            <person name="Lin M."/>
            <person name="Jin Q."/>
        </authorList>
    </citation>
    <scope>NUCLEOTIDE SEQUENCE [LARGE SCALE GENOMIC DNA]</scope>
    <source>
        <strain>A1501</strain>
    </source>
</reference>
<feature type="chain" id="PRO_0000302589" description="Acyl-[acyl-carrier-protein]--UDP-N-acetylglucosamine O-acyltransferase">
    <location>
        <begin position="1"/>
        <end position="258"/>
    </location>
</feature>
<gene>
    <name evidence="1" type="primary">lpxA</name>
    <name type="ordered locus">PST_1549</name>
</gene>
<comment type="function">
    <text evidence="1">Involved in the biosynthesis of lipid A, a phosphorylated glycolipid that anchors the lipopolysaccharide to the outer membrane of the cell.</text>
</comment>
<comment type="catalytic activity">
    <reaction evidence="1">
        <text>a (3R)-hydroxyacyl-[ACP] + UDP-N-acetyl-alpha-D-glucosamine = a UDP-3-O-[(3R)-3-hydroxyacyl]-N-acetyl-alpha-D-glucosamine + holo-[ACP]</text>
        <dbReference type="Rhea" id="RHEA:67812"/>
        <dbReference type="Rhea" id="RHEA-COMP:9685"/>
        <dbReference type="Rhea" id="RHEA-COMP:9945"/>
        <dbReference type="ChEBI" id="CHEBI:57705"/>
        <dbReference type="ChEBI" id="CHEBI:64479"/>
        <dbReference type="ChEBI" id="CHEBI:78827"/>
        <dbReference type="ChEBI" id="CHEBI:173225"/>
        <dbReference type="EC" id="2.3.1.129"/>
    </reaction>
</comment>
<comment type="pathway">
    <text evidence="1">Glycolipid biosynthesis; lipid IV(A) biosynthesis; lipid IV(A) from (3R)-3-hydroxytetradecanoyl-[acyl-carrier-protein] and UDP-N-acetyl-alpha-D-glucosamine: step 1/6.</text>
</comment>
<comment type="subunit">
    <text evidence="1">Homotrimer.</text>
</comment>
<comment type="subcellular location">
    <subcellularLocation>
        <location evidence="1">Cytoplasm</location>
    </subcellularLocation>
</comment>
<comment type="similarity">
    <text evidence="1">Belongs to the transferase hexapeptide repeat family. LpxA subfamily.</text>
</comment>
<evidence type="ECO:0000255" key="1">
    <source>
        <dbReference type="HAMAP-Rule" id="MF_00387"/>
    </source>
</evidence>
<accession>A4VJT3</accession>
<name>LPXA_STUS1</name>
<protein>
    <recommendedName>
        <fullName evidence="1">Acyl-[acyl-carrier-protein]--UDP-N-acetylglucosamine O-acyltransferase</fullName>
        <shortName evidence="1">UDP-N-acetylglucosamine acyltransferase</shortName>
        <ecNumber evidence="1">2.3.1.129</ecNumber>
    </recommendedName>
</protein>
<dbReference type="EC" id="2.3.1.129" evidence="1"/>
<dbReference type="EMBL" id="CP000304">
    <property type="protein sequence ID" value="ABP79234.1"/>
    <property type="molecule type" value="Genomic_DNA"/>
</dbReference>
<dbReference type="RefSeq" id="WP_011912712.1">
    <property type="nucleotide sequence ID" value="NC_009434.1"/>
</dbReference>
<dbReference type="SMR" id="A4VJT3"/>
<dbReference type="GeneID" id="66820695"/>
<dbReference type="KEGG" id="psa:PST_1549"/>
<dbReference type="eggNOG" id="COG1043">
    <property type="taxonomic scope" value="Bacteria"/>
</dbReference>
<dbReference type="HOGENOM" id="CLU_061249_0_0_6"/>
<dbReference type="UniPathway" id="UPA00359">
    <property type="reaction ID" value="UER00477"/>
</dbReference>
<dbReference type="Proteomes" id="UP000000233">
    <property type="component" value="Chromosome"/>
</dbReference>
<dbReference type="GO" id="GO:0005737">
    <property type="term" value="C:cytoplasm"/>
    <property type="evidence" value="ECO:0007669"/>
    <property type="project" value="UniProtKB-SubCell"/>
</dbReference>
<dbReference type="GO" id="GO:0016020">
    <property type="term" value="C:membrane"/>
    <property type="evidence" value="ECO:0007669"/>
    <property type="project" value="GOC"/>
</dbReference>
<dbReference type="GO" id="GO:0008780">
    <property type="term" value="F:acyl-[acyl-carrier-protein]-UDP-N-acetylglucosamine O-acyltransferase activity"/>
    <property type="evidence" value="ECO:0007669"/>
    <property type="project" value="UniProtKB-UniRule"/>
</dbReference>
<dbReference type="GO" id="GO:0009245">
    <property type="term" value="P:lipid A biosynthetic process"/>
    <property type="evidence" value="ECO:0007669"/>
    <property type="project" value="UniProtKB-UniRule"/>
</dbReference>
<dbReference type="CDD" id="cd03351">
    <property type="entry name" value="LbH_UDP-GlcNAc_AT"/>
    <property type="match status" value="1"/>
</dbReference>
<dbReference type="FunFam" id="2.160.10.10:FF:000003">
    <property type="entry name" value="Acyl-[acyl-carrier-protein]--UDP-N-acetylglucosamine O-acyltransferase"/>
    <property type="match status" value="1"/>
</dbReference>
<dbReference type="Gene3D" id="2.160.10.10">
    <property type="entry name" value="Hexapeptide repeat proteins"/>
    <property type="match status" value="1"/>
</dbReference>
<dbReference type="Gene3D" id="1.20.1180.10">
    <property type="entry name" value="Udp N-acetylglucosamine O-acyltransferase, C-terminal domain"/>
    <property type="match status" value="1"/>
</dbReference>
<dbReference type="HAMAP" id="MF_00387">
    <property type="entry name" value="LpxA"/>
    <property type="match status" value="1"/>
</dbReference>
<dbReference type="InterPro" id="IPR029098">
    <property type="entry name" value="Acetyltransf_C"/>
</dbReference>
<dbReference type="InterPro" id="IPR037157">
    <property type="entry name" value="Acetyltransf_C_sf"/>
</dbReference>
<dbReference type="InterPro" id="IPR001451">
    <property type="entry name" value="Hexapep"/>
</dbReference>
<dbReference type="InterPro" id="IPR018357">
    <property type="entry name" value="Hexapep_transf_CS"/>
</dbReference>
<dbReference type="InterPro" id="IPR010137">
    <property type="entry name" value="Lipid_A_LpxA"/>
</dbReference>
<dbReference type="InterPro" id="IPR011004">
    <property type="entry name" value="Trimer_LpxA-like_sf"/>
</dbReference>
<dbReference type="NCBIfam" id="TIGR01852">
    <property type="entry name" value="lipid_A_lpxA"/>
    <property type="match status" value="1"/>
</dbReference>
<dbReference type="NCBIfam" id="NF003657">
    <property type="entry name" value="PRK05289.1"/>
    <property type="match status" value="1"/>
</dbReference>
<dbReference type="PANTHER" id="PTHR43480">
    <property type="entry name" value="ACYL-[ACYL-CARRIER-PROTEIN]--UDP-N-ACETYLGLUCOSAMINE O-ACYLTRANSFERASE"/>
    <property type="match status" value="1"/>
</dbReference>
<dbReference type="PANTHER" id="PTHR43480:SF1">
    <property type="entry name" value="ACYL-[ACYL-CARRIER-PROTEIN]--UDP-N-ACETYLGLUCOSAMINE O-ACYLTRANSFERASE, MITOCHONDRIAL-RELATED"/>
    <property type="match status" value="1"/>
</dbReference>
<dbReference type="Pfam" id="PF13720">
    <property type="entry name" value="Acetyltransf_11"/>
    <property type="match status" value="1"/>
</dbReference>
<dbReference type="Pfam" id="PF00132">
    <property type="entry name" value="Hexapep"/>
    <property type="match status" value="2"/>
</dbReference>
<dbReference type="PIRSF" id="PIRSF000456">
    <property type="entry name" value="UDP-GlcNAc_acltr"/>
    <property type="match status" value="1"/>
</dbReference>
<dbReference type="SUPFAM" id="SSF51161">
    <property type="entry name" value="Trimeric LpxA-like enzymes"/>
    <property type="match status" value="1"/>
</dbReference>
<dbReference type="PROSITE" id="PS00101">
    <property type="entry name" value="HEXAPEP_TRANSFERASES"/>
    <property type="match status" value="1"/>
</dbReference>
<proteinExistence type="inferred from homology"/>
<sequence>MSLIDPRAIIDPAARLADDVQVGPWSIIGPDVEIGEGTVIASHVVIKGPTRIGRHNRIYQFSSVGEDTPDLKYKGEPTRLVIGDHNVIREGVTIHRGTVQDRSETTIGDHNLIMAYAHIGHDSVIANHCILVNNTALAGHVHVGDWAILSGYTLVHQFCHIGAHSFSGMGTAIGKDVPAFVTVFGNPAEARSMNFEGMRRRGFSAEAVHALRNAYKIVYRKGLTVEAALSELAESAAAFPEVAIFRDSIQASTRGITR</sequence>
<organism>
    <name type="scientific">Stutzerimonas stutzeri (strain A1501)</name>
    <name type="common">Pseudomonas stutzeri</name>
    <dbReference type="NCBI Taxonomy" id="379731"/>
    <lineage>
        <taxon>Bacteria</taxon>
        <taxon>Pseudomonadati</taxon>
        <taxon>Pseudomonadota</taxon>
        <taxon>Gammaproteobacteria</taxon>
        <taxon>Pseudomonadales</taxon>
        <taxon>Pseudomonadaceae</taxon>
        <taxon>Stutzerimonas</taxon>
    </lineage>
</organism>